<proteinExistence type="inferred from homology"/>
<sequence length="24" mass="2725">MAKEQQVQANDLQEKLIAVNRVAK</sequence>
<protein>
    <recommendedName>
        <fullName evidence="2">Small ribosomal subunit protein uS5</fullName>
    </recommendedName>
    <alternativeName>
        <fullName>30S ribosomal protein S5</fullName>
    </alternativeName>
</protein>
<keyword id="KW-0687">Ribonucleoprotein</keyword>
<keyword id="KW-0689">Ribosomal protein</keyword>
<keyword id="KW-0694">RNA-binding</keyword>
<keyword id="KW-0699">rRNA-binding</keyword>
<name>RS5_VIBPR</name>
<gene>
    <name type="primary">rpsE</name>
</gene>
<reference key="1">
    <citation type="journal article" date="1996" name="Gene">
        <title>Sequence, overproduction and purification of Vibrio proteolyticus ribosomal protein L18 for in vitro and in vivo studies.</title>
        <authorList>
            <person name="Setterquist R.A."/>
            <person name="Smith G.K."/>
            <person name="Oakley T.H."/>
            <person name="Lee Y.H."/>
            <person name="Fox G.E."/>
        </authorList>
    </citation>
    <scope>NUCLEOTIDE SEQUENCE [GENOMIC DNA]</scope>
    <source>
        <strain>ATCC 15338 / DSM 30189 / CCUG 20302 / JCM 21193 / LMG 3772 / NBRC 13287 / NCIMB 1326</strain>
    </source>
</reference>
<comment type="function">
    <text evidence="1">With S4 and S12 plays an important role in translational accuracy.</text>
</comment>
<comment type="function">
    <text evidence="1">Located at the back of the 30S subunit body where it stabilizes the conformation of the head with respect to the body.</text>
</comment>
<comment type="subunit">
    <text evidence="1">Part of the 30S ribosomal subunit. Contacts proteins S4 and S8 (By similarity).</text>
</comment>
<comment type="domain">
    <text>The N-terminal domain interacts with the head of the 30S subunit; the C-terminal domain interacts with the body and contacts protein S4. The interaction surface between S4 and S5 is involved in control of translational fidelity.</text>
</comment>
<comment type="similarity">
    <text evidence="2">Belongs to the universal ribosomal protein uS5 family.</text>
</comment>
<organism>
    <name type="scientific">Vibrio proteolyticus</name>
    <name type="common">Aeromonas proteolytica</name>
    <dbReference type="NCBI Taxonomy" id="671"/>
    <lineage>
        <taxon>Bacteria</taxon>
        <taxon>Pseudomonadati</taxon>
        <taxon>Pseudomonadota</taxon>
        <taxon>Gammaproteobacteria</taxon>
        <taxon>Vibrionales</taxon>
        <taxon>Vibrionaceae</taxon>
        <taxon>Vibrio</taxon>
    </lineage>
</organism>
<evidence type="ECO:0000250" key="1"/>
<evidence type="ECO:0000305" key="2"/>
<dbReference type="EMBL" id="U38943">
    <property type="protein sequence ID" value="AAB41330.1"/>
    <property type="molecule type" value="Genomic_DNA"/>
</dbReference>
<dbReference type="GO" id="GO:1990904">
    <property type="term" value="C:ribonucleoprotein complex"/>
    <property type="evidence" value="ECO:0007669"/>
    <property type="project" value="UniProtKB-KW"/>
</dbReference>
<dbReference type="GO" id="GO:0005840">
    <property type="term" value="C:ribosome"/>
    <property type="evidence" value="ECO:0007669"/>
    <property type="project" value="UniProtKB-KW"/>
</dbReference>
<dbReference type="GO" id="GO:0019843">
    <property type="term" value="F:rRNA binding"/>
    <property type="evidence" value="ECO:0007669"/>
    <property type="project" value="UniProtKB-KW"/>
</dbReference>
<feature type="chain" id="PRO_0000131630" description="Small ribosomal subunit protein uS5">
    <location>
        <begin position="1"/>
        <end position="24" status="greater than"/>
    </location>
</feature>
<feature type="non-terminal residue">
    <location>
        <position position="24"/>
    </location>
</feature>
<accession>P52856</accession>